<protein>
    <recommendedName>
        <fullName evidence="1">Large ribosomal subunit protein uL1</fullName>
    </recommendedName>
    <alternativeName>
        <fullName evidence="2">50S ribosomal protein L1</fullName>
    </alternativeName>
</protein>
<feature type="chain" id="PRO_0000308052" description="Large ribosomal subunit protein uL1">
    <location>
        <begin position="1"/>
        <end position="235"/>
    </location>
</feature>
<proteinExistence type="inferred from homology"/>
<keyword id="KW-0678">Repressor</keyword>
<keyword id="KW-0687">Ribonucleoprotein</keyword>
<keyword id="KW-0689">Ribosomal protein</keyword>
<keyword id="KW-0694">RNA-binding</keyword>
<keyword id="KW-0699">rRNA-binding</keyword>
<keyword id="KW-0810">Translation regulation</keyword>
<keyword id="KW-0820">tRNA-binding</keyword>
<comment type="function">
    <text evidence="1">Binds directly to 23S rRNA. The L1 stalk is quite mobile in the ribosome, and is involved in E site tRNA release.</text>
</comment>
<comment type="function">
    <text evidence="1">Protein L1 is also a translational repressor protein, it controls the translation of the L11 operon by binding to its mRNA.</text>
</comment>
<comment type="subunit">
    <text evidence="1">Part of the 50S ribosomal subunit.</text>
</comment>
<comment type="similarity">
    <text evidence="1">Belongs to the universal ribosomal protein uL1 family.</text>
</comment>
<dbReference type="EMBL" id="CP000580">
    <property type="protein sequence ID" value="ABN96761.1"/>
    <property type="molecule type" value="Genomic_DNA"/>
</dbReference>
<dbReference type="SMR" id="A3PV34"/>
<dbReference type="KEGG" id="mjl:Mjls_0952"/>
<dbReference type="HOGENOM" id="CLU_062853_0_0_11"/>
<dbReference type="BioCyc" id="MSP164757:G1G8C-965-MONOMER"/>
<dbReference type="GO" id="GO:0015934">
    <property type="term" value="C:large ribosomal subunit"/>
    <property type="evidence" value="ECO:0007669"/>
    <property type="project" value="InterPro"/>
</dbReference>
<dbReference type="GO" id="GO:0019843">
    <property type="term" value="F:rRNA binding"/>
    <property type="evidence" value="ECO:0007669"/>
    <property type="project" value="UniProtKB-UniRule"/>
</dbReference>
<dbReference type="GO" id="GO:0003735">
    <property type="term" value="F:structural constituent of ribosome"/>
    <property type="evidence" value="ECO:0007669"/>
    <property type="project" value="InterPro"/>
</dbReference>
<dbReference type="GO" id="GO:0000049">
    <property type="term" value="F:tRNA binding"/>
    <property type="evidence" value="ECO:0007669"/>
    <property type="project" value="UniProtKB-KW"/>
</dbReference>
<dbReference type="GO" id="GO:0006417">
    <property type="term" value="P:regulation of translation"/>
    <property type="evidence" value="ECO:0007669"/>
    <property type="project" value="UniProtKB-KW"/>
</dbReference>
<dbReference type="GO" id="GO:0006412">
    <property type="term" value="P:translation"/>
    <property type="evidence" value="ECO:0007669"/>
    <property type="project" value="UniProtKB-UniRule"/>
</dbReference>
<dbReference type="CDD" id="cd00403">
    <property type="entry name" value="Ribosomal_L1"/>
    <property type="match status" value="1"/>
</dbReference>
<dbReference type="FunFam" id="3.40.50.790:FF:000001">
    <property type="entry name" value="50S ribosomal protein L1"/>
    <property type="match status" value="1"/>
</dbReference>
<dbReference type="Gene3D" id="3.30.190.20">
    <property type="match status" value="1"/>
</dbReference>
<dbReference type="Gene3D" id="3.40.50.790">
    <property type="match status" value="1"/>
</dbReference>
<dbReference type="HAMAP" id="MF_01318_B">
    <property type="entry name" value="Ribosomal_uL1_B"/>
    <property type="match status" value="1"/>
</dbReference>
<dbReference type="InterPro" id="IPR005878">
    <property type="entry name" value="Ribosom_uL1_bac-type"/>
</dbReference>
<dbReference type="InterPro" id="IPR002143">
    <property type="entry name" value="Ribosomal_uL1"/>
</dbReference>
<dbReference type="InterPro" id="IPR023674">
    <property type="entry name" value="Ribosomal_uL1-like"/>
</dbReference>
<dbReference type="InterPro" id="IPR028364">
    <property type="entry name" value="Ribosomal_uL1/biogenesis"/>
</dbReference>
<dbReference type="InterPro" id="IPR016095">
    <property type="entry name" value="Ribosomal_uL1_3-a/b-sand"/>
</dbReference>
<dbReference type="InterPro" id="IPR023673">
    <property type="entry name" value="Ribosomal_uL1_CS"/>
</dbReference>
<dbReference type="NCBIfam" id="TIGR01169">
    <property type="entry name" value="rplA_bact"/>
    <property type="match status" value="1"/>
</dbReference>
<dbReference type="PANTHER" id="PTHR36427">
    <property type="entry name" value="54S RIBOSOMAL PROTEIN L1, MITOCHONDRIAL"/>
    <property type="match status" value="1"/>
</dbReference>
<dbReference type="PANTHER" id="PTHR36427:SF3">
    <property type="entry name" value="LARGE RIBOSOMAL SUBUNIT PROTEIN UL1M"/>
    <property type="match status" value="1"/>
</dbReference>
<dbReference type="Pfam" id="PF00687">
    <property type="entry name" value="Ribosomal_L1"/>
    <property type="match status" value="1"/>
</dbReference>
<dbReference type="PIRSF" id="PIRSF002155">
    <property type="entry name" value="Ribosomal_L1"/>
    <property type="match status" value="1"/>
</dbReference>
<dbReference type="SUPFAM" id="SSF56808">
    <property type="entry name" value="Ribosomal protein L1"/>
    <property type="match status" value="1"/>
</dbReference>
<dbReference type="PROSITE" id="PS01199">
    <property type="entry name" value="RIBOSOMAL_L1"/>
    <property type="match status" value="1"/>
</dbReference>
<reference key="1">
    <citation type="submission" date="2007-02" db="EMBL/GenBank/DDBJ databases">
        <title>Complete sequence of Mycobacterium sp. JLS.</title>
        <authorList>
            <consortium name="US DOE Joint Genome Institute"/>
            <person name="Copeland A."/>
            <person name="Lucas S."/>
            <person name="Lapidus A."/>
            <person name="Barry K."/>
            <person name="Detter J.C."/>
            <person name="Glavina del Rio T."/>
            <person name="Hammon N."/>
            <person name="Israni S."/>
            <person name="Dalin E."/>
            <person name="Tice H."/>
            <person name="Pitluck S."/>
            <person name="Chain P."/>
            <person name="Malfatti S."/>
            <person name="Shin M."/>
            <person name="Vergez L."/>
            <person name="Schmutz J."/>
            <person name="Larimer F."/>
            <person name="Land M."/>
            <person name="Hauser L."/>
            <person name="Kyrpides N."/>
            <person name="Mikhailova N."/>
            <person name="Miller C.D."/>
            <person name="Anderson A.J."/>
            <person name="Sims R.C."/>
            <person name="Richardson P."/>
        </authorList>
    </citation>
    <scope>NUCLEOTIDE SEQUENCE [LARGE SCALE GENOMIC DNA]</scope>
    <source>
        <strain>JLS</strain>
    </source>
</reference>
<sequence>MSKNSKAYREAAEKVDKTKLYSPLEAAKLAKETSSKKQDATVEVAIRLGVDPRKADQMVRGTVNLPHGTGKTARVAVFAVGDKAEQAAAAGADIVGSDDLIEQIQGGMLDFDAAIATPDQMAKVGRIARILGPRGLMPNPKTGTVTADVAKAVSDIKGGKINFRVDKQANLHIVIGKASFDEKKLAENYGAALDEILRAKPSASKGRYLKKIVVSTTTGPGIPVDPQVTRNFAEA</sequence>
<accession>A3PV34</accession>
<gene>
    <name evidence="1" type="primary">rplA</name>
    <name type="ordered locus">Mjls_0952</name>
</gene>
<organism>
    <name type="scientific">Mycobacterium sp. (strain JLS)</name>
    <dbReference type="NCBI Taxonomy" id="164757"/>
    <lineage>
        <taxon>Bacteria</taxon>
        <taxon>Bacillati</taxon>
        <taxon>Actinomycetota</taxon>
        <taxon>Actinomycetes</taxon>
        <taxon>Mycobacteriales</taxon>
        <taxon>Mycobacteriaceae</taxon>
        <taxon>Mycobacterium</taxon>
    </lineage>
</organism>
<evidence type="ECO:0000255" key="1">
    <source>
        <dbReference type="HAMAP-Rule" id="MF_01318"/>
    </source>
</evidence>
<evidence type="ECO:0000305" key="2"/>
<name>RL1_MYCSJ</name>